<evidence type="ECO:0000255" key="1">
    <source>
        <dbReference type="HAMAP-Rule" id="MF_00044"/>
    </source>
</evidence>
<protein>
    <recommendedName>
        <fullName evidence="1">Aspartate--tRNA ligase</fullName>
        <ecNumber evidence="1">6.1.1.12</ecNumber>
    </recommendedName>
    <alternativeName>
        <fullName evidence="1">Aspartyl-tRNA synthetase</fullName>
        <shortName evidence="1">AspRS</shortName>
    </alternativeName>
</protein>
<sequence>MRTNFCGTLNVSHVGKTIKLCGWVNKFRNLKEILFIDIRDQTGIIQVLFSKKSELLFKKAADLRNEFCIQVLGIVQERITKNKNYTMSTGEIEIFALELKIFNKSQPLPIDLKSCNIEETRLKFRYLDLRHPNMIRNIIIRNDITIIIRNFMKKNKFLDIETPILTKSTPEGARDYIVPSRIHKNKYYALPQSPQLFKQLLMISGIDRYYQIAKCFRDEDLRSDRQPEFTQIDIEVSFLNAKKVRKIIERMITSVWNKIINVHLKKFQKLSFYDAIKMYGTDKPDLRNPIQLIDVTNIIHVKNNINAITLPNKKTQQNIVIAMCIPRGMSLNINYINSYHHLVQKYTKNKLFNVEVLNHCPIKEQKKTSFHKKPSSDLTFQLISKTSAKHGDMIFYLSEKSPLVYEIMGKLRIELGKDLNLIDYNSWKPLWITNFPLFKKNELNQYISTHHPFTAPKYMKIDTSITNYEEIVADSYDLVINGYEIGSGSVRIHDLELQKTVFNILGINTVLQKNNFNFFLNALKYGTPPHAGIALGLDRITMLLTNSHNLRDVIAFPKTTTGSCLTTGAPSKIIHF</sequence>
<name>SYD_BUCBP</name>
<feature type="chain" id="PRO_0000110845" description="Aspartate--tRNA ligase">
    <location>
        <begin position="1"/>
        <end position="576"/>
    </location>
</feature>
<feature type="region of interest" description="Aspartate" evidence="1">
    <location>
        <begin position="195"/>
        <end position="198"/>
    </location>
</feature>
<feature type="binding site" evidence="1">
    <location>
        <position position="171"/>
    </location>
    <ligand>
        <name>L-aspartate</name>
        <dbReference type="ChEBI" id="CHEBI:29991"/>
    </ligand>
</feature>
<feature type="binding site" evidence="1">
    <location>
        <begin position="217"/>
        <end position="219"/>
    </location>
    <ligand>
        <name>ATP</name>
        <dbReference type="ChEBI" id="CHEBI:30616"/>
    </ligand>
</feature>
<feature type="binding site" evidence="1">
    <location>
        <position position="217"/>
    </location>
    <ligand>
        <name>L-aspartate</name>
        <dbReference type="ChEBI" id="CHEBI:29991"/>
    </ligand>
</feature>
<feature type="binding site" evidence="1">
    <location>
        <position position="226"/>
    </location>
    <ligand>
        <name>ATP</name>
        <dbReference type="ChEBI" id="CHEBI:30616"/>
    </ligand>
</feature>
<feature type="binding site" evidence="1">
    <location>
        <position position="450"/>
    </location>
    <ligand>
        <name>L-aspartate</name>
        <dbReference type="ChEBI" id="CHEBI:29991"/>
    </ligand>
</feature>
<feature type="binding site" evidence="1">
    <location>
        <position position="484"/>
    </location>
    <ligand>
        <name>ATP</name>
        <dbReference type="ChEBI" id="CHEBI:30616"/>
    </ligand>
</feature>
<feature type="binding site" evidence="1">
    <location>
        <position position="491"/>
    </location>
    <ligand>
        <name>L-aspartate</name>
        <dbReference type="ChEBI" id="CHEBI:29991"/>
    </ligand>
</feature>
<feature type="binding site" evidence="1">
    <location>
        <begin position="536"/>
        <end position="539"/>
    </location>
    <ligand>
        <name>ATP</name>
        <dbReference type="ChEBI" id="CHEBI:30616"/>
    </ligand>
</feature>
<keyword id="KW-0030">Aminoacyl-tRNA synthetase</keyword>
<keyword id="KW-0067">ATP-binding</keyword>
<keyword id="KW-0963">Cytoplasm</keyword>
<keyword id="KW-0436">Ligase</keyword>
<keyword id="KW-0547">Nucleotide-binding</keyword>
<keyword id="KW-0648">Protein biosynthesis</keyword>
<keyword id="KW-1185">Reference proteome</keyword>
<comment type="function">
    <text evidence="1">Catalyzes the attachment of L-aspartate to tRNA(Asp) in a two-step reaction: L-aspartate is first activated by ATP to form Asp-AMP and then transferred to the acceptor end of tRNA(Asp).</text>
</comment>
<comment type="catalytic activity">
    <reaction evidence="1">
        <text>tRNA(Asp) + L-aspartate + ATP = L-aspartyl-tRNA(Asp) + AMP + diphosphate</text>
        <dbReference type="Rhea" id="RHEA:19649"/>
        <dbReference type="Rhea" id="RHEA-COMP:9660"/>
        <dbReference type="Rhea" id="RHEA-COMP:9678"/>
        <dbReference type="ChEBI" id="CHEBI:29991"/>
        <dbReference type="ChEBI" id="CHEBI:30616"/>
        <dbReference type="ChEBI" id="CHEBI:33019"/>
        <dbReference type="ChEBI" id="CHEBI:78442"/>
        <dbReference type="ChEBI" id="CHEBI:78516"/>
        <dbReference type="ChEBI" id="CHEBI:456215"/>
        <dbReference type="EC" id="6.1.1.12"/>
    </reaction>
</comment>
<comment type="subunit">
    <text evidence="1">Homodimer.</text>
</comment>
<comment type="subcellular location">
    <subcellularLocation>
        <location evidence="1">Cytoplasm</location>
    </subcellularLocation>
</comment>
<comment type="similarity">
    <text evidence="1">Belongs to the class-II aminoacyl-tRNA synthetase family. Type 1 subfamily.</text>
</comment>
<gene>
    <name evidence="1" type="primary">aspS</name>
    <name type="ordered locus">bbp_293</name>
</gene>
<accession>P59422</accession>
<proteinExistence type="inferred from homology"/>
<organism>
    <name type="scientific">Buchnera aphidicola subsp. Baizongia pistaciae (strain Bp)</name>
    <dbReference type="NCBI Taxonomy" id="224915"/>
    <lineage>
        <taxon>Bacteria</taxon>
        <taxon>Pseudomonadati</taxon>
        <taxon>Pseudomonadota</taxon>
        <taxon>Gammaproteobacteria</taxon>
        <taxon>Enterobacterales</taxon>
        <taxon>Erwiniaceae</taxon>
        <taxon>Buchnera</taxon>
    </lineage>
</organism>
<reference key="1">
    <citation type="journal article" date="2003" name="Proc. Natl. Acad. Sci. U.S.A.">
        <title>Reductive genome evolution in Buchnera aphidicola.</title>
        <authorList>
            <person name="van Ham R.C.H.J."/>
            <person name="Kamerbeek J."/>
            <person name="Palacios C."/>
            <person name="Rausell C."/>
            <person name="Abascal F."/>
            <person name="Bastolla U."/>
            <person name="Fernandez J.M."/>
            <person name="Jimenez L."/>
            <person name="Postigo M."/>
            <person name="Silva F.J."/>
            <person name="Tamames J."/>
            <person name="Viguera E."/>
            <person name="Latorre A."/>
            <person name="Valencia A."/>
            <person name="Moran F."/>
            <person name="Moya A."/>
        </authorList>
    </citation>
    <scope>NUCLEOTIDE SEQUENCE [LARGE SCALE GENOMIC DNA]</scope>
    <source>
        <strain>Bp</strain>
    </source>
</reference>
<dbReference type="EC" id="6.1.1.12" evidence="1"/>
<dbReference type="EMBL" id="AE016826">
    <property type="protein sequence ID" value="AAO27018.1"/>
    <property type="molecule type" value="Genomic_DNA"/>
</dbReference>
<dbReference type="RefSeq" id="WP_011091419.1">
    <property type="nucleotide sequence ID" value="NC_004545.1"/>
</dbReference>
<dbReference type="SMR" id="P59422"/>
<dbReference type="STRING" id="224915.bbp_293"/>
<dbReference type="KEGG" id="bab:bbp_293"/>
<dbReference type="eggNOG" id="COG0173">
    <property type="taxonomic scope" value="Bacteria"/>
</dbReference>
<dbReference type="HOGENOM" id="CLU_014330_3_2_6"/>
<dbReference type="OrthoDB" id="9762036at2"/>
<dbReference type="Proteomes" id="UP000000601">
    <property type="component" value="Chromosome"/>
</dbReference>
<dbReference type="GO" id="GO:0005737">
    <property type="term" value="C:cytoplasm"/>
    <property type="evidence" value="ECO:0007669"/>
    <property type="project" value="UniProtKB-SubCell"/>
</dbReference>
<dbReference type="GO" id="GO:0004815">
    <property type="term" value="F:aspartate-tRNA ligase activity"/>
    <property type="evidence" value="ECO:0007669"/>
    <property type="project" value="UniProtKB-UniRule"/>
</dbReference>
<dbReference type="GO" id="GO:0005524">
    <property type="term" value="F:ATP binding"/>
    <property type="evidence" value="ECO:0007669"/>
    <property type="project" value="UniProtKB-UniRule"/>
</dbReference>
<dbReference type="GO" id="GO:0003676">
    <property type="term" value="F:nucleic acid binding"/>
    <property type="evidence" value="ECO:0007669"/>
    <property type="project" value="InterPro"/>
</dbReference>
<dbReference type="GO" id="GO:0006422">
    <property type="term" value="P:aspartyl-tRNA aminoacylation"/>
    <property type="evidence" value="ECO:0007669"/>
    <property type="project" value="UniProtKB-UniRule"/>
</dbReference>
<dbReference type="CDD" id="cd00777">
    <property type="entry name" value="AspRS_core"/>
    <property type="match status" value="1"/>
</dbReference>
<dbReference type="CDD" id="cd04317">
    <property type="entry name" value="EcAspRS_like_N"/>
    <property type="match status" value="1"/>
</dbReference>
<dbReference type="Gene3D" id="3.30.930.10">
    <property type="entry name" value="Bira Bifunctional Protein, Domain 2"/>
    <property type="match status" value="1"/>
</dbReference>
<dbReference type="Gene3D" id="3.30.1360.30">
    <property type="entry name" value="GAD-like domain"/>
    <property type="match status" value="1"/>
</dbReference>
<dbReference type="Gene3D" id="2.40.50.140">
    <property type="entry name" value="Nucleic acid-binding proteins"/>
    <property type="match status" value="1"/>
</dbReference>
<dbReference type="HAMAP" id="MF_00044">
    <property type="entry name" value="Asp_tRNA_synth_type1"/>
    <property type="match status" value="1"/>
</dbReference>
<dbReference type="InterPro" id="IPR004364">
    <property type="entry name" value="Aa-tRNA-synt_II"/>
</dbReference>
<dbReference type="InterPro" id="IPR006195">
    <property type="entry name" value="aa-tRNA-synth_II"/>
</dbReference>
<dbReference type="InterPro" id="IPR045864">
    <property type="entry name" value="aa-tRNA-synth_II/BPL/LPL"/>
</dbReference>
<dbReference type="InterPro" id="IPR004524">
    <property type="entry name" value="Asp-tRNA-ligase_1"/>
</dbReference>
<dbReference type="InterPro" id="IPR047089">
    <property type="entry name" value="Asp-tRNA-ligase_1_N"/>
</dbReference>
<dbReference type="InterPro" id="IPR002312">
    <property type="entry name" value="Asp/Asn-tRNA-synth_IIb"/>
</dbReference>
<dbReference type="InterPro" id="IPR047090">
    <property type="entry name" value="AspRS_core"/>
</dbReference>
<dbReference type="InterPro" id="IPR004115">
    <property type="entry name" value="GAD-like_sf"/>
</dbReference>
<dbReference type="InterPro" id="IPR012340">
    <property type="entry name" value="NA-bd_OB-fold"/>
</dbReference>
<dbReference type="InterPro" id="IPR004365">
    <property type="entry name" value="NA-bd_OB_tRNA"/>
</dbReference>
<dbReference type="NCBIfam" id="TIGR00459">
    <property type="entry name" value="aspS_bact"/>
    <property type="match status" value="1"/>
</dbReference>
<dbReference type="NCBIfam" id="NF001750">
    <property type="entry name" value="PRK00476.1"/>
    <property type="match status" value="1"/>
</dbReference>
<dbReference type="PANTHER" id="PTHR22594:SF5">
    <property type="entry name" value="ASPARTATE--TRNA LIGASE, MITOCHONDRIAL"/>
    <property type="match status" value="1"/>
</dbReference>
<dbReference type="PANTHER" id="PTHR22594">
    <property type="entry name" value="ASPARTYL/LYSYL-TRNA SYNTHETASE"/>
    <property type="match status" value="1"/>
</dbReference>
<dbReference type="Pfam" id="PF00152">
    <property type="entry name" value="tRNA-synt_2"/>
    <property type="match status" value="1"/>
</dbReference>
<dbReference type="Pfam" id="PF01336">
    <property type="entry name" value="tRNA_anti-codon"/>
    <property type="match status" value="1"/>
</dbReference>
<dbReference type="PRINTS" id="PR01042">
    <property type="entry name" value="TRNASYNTHASP"/>
</dbReference>
<dbReference type="SUPFAM" id="SSF55681">
    <property type="entry name" value="Class II aaRS and biotin synthetases"/>
    <property type="match status" value="1"/>
</dbReference>
<dbReference type="SUPFAM" id="SSF55261">
    <property type="entry name" value="GAD domain-like"/>
    <property type="match status" value="1"/>
</dbReference>
<dbReference type="SUPFAM" id="SSF50249">
    <property type="entry name" value="Nucleic acid-binding proteins"/>
    <property type="match status" value="1"/>
</dbReference>
<dbReference type="PROSITE" id="PS50862">
    <property type="entry name" value="AA_TRNA_LIGASE_II"/>
    <property type="match status" value="1"/>
</dbReference>